<comment type="function">
    <text evidence="1 6">Plays an important role in bone formation and normal bone mineralization. Promotes the differentiation of myoblasts into osteoblasts (PubMed:20025746). May induce the commitment and differentiation of myoblasts into osteoblasts through an enhancement of BMP2 production and interaction with the BMP-RUNX2 pathway. Up-regulates the expression of ATF4, a transcription factor which plays a central role in osteoblast differentiation. Essential for normal spermatogenesis and late testicular differentiation (By similarity).</text>
</comment>
<comment type="subunit">
    <text evidence="1">Interacts with SMAD1, SMAD5 and RUNX2.</text>
</comment>
<comment type="subcellular location">
    <subcellularLocation>
        <location evidence="6 7">Cell membrane</location>
        <topology evidence="2">Single-pass type I membrane protein</topology>
    </subcellularLocation>
    <subcellularLocation>
        <location evidence="1">Cytoplasm</location>
    </subcellularLocation>
    <subcellularLocation>
        <location evidence="1">Endoplasmic reticulum membrane</location>
    </subcellularLocation>
    <subcellularLocation>
        <location evidence="8">Secreted</location>
    </subcellularLocation>
</comment>
<comment type="tissue specificity">
    <text evidence="7 8">Expressed in brain microglia (at protein level) (PubMed:26250788). Detected in urine (at protein level) (PubMed:37453717). Elevated expression levels seen in the brain of patients with Alzheimer disease (PubMed:26250788). Expressed by osteoblast-like cells in bone tissues and follicular dendritic cells in lymphoid tissues (PubMed:26250788).</text>
</comment>
<reference key="1">
    <citation type="journal article" date="2003" name="Genome Res.">
        <title>The secreted protein discovery initiative (SPDI), a large-scale effort to identify novel human secreted and transmembrane proteins: a bioinformatics assessment.</title>
        <authorList>
            <person name="Clark H.F."/>
            <person name="Gurney A.L."/>
            <person name="Abaya E."/>
            <person name="Baker K."/>
            <person name="Baldwin D.T."/>
            <person name="Brush J."/>
            <person name="Chen J."/>
            <person name="Chow B."/>
            <person name="Chui C."/>
            <person name="Crowley C."/>
            <person name="Currell B."/>
            <person name="Deuel B."/>
            <person name="Dowd P."/>
            <person name="Eaton D."/>
            <person name="Foster J.S."/>
            <person name="Grimaldi C."/>
            <person name="Gu Q."/>
            <person name="Hass P.E."/>
            <person name="Heldens S."/>
            <person name="Huang A."/>
            <person name="Kim H.S."/>
            <person name="Klimowski L."/>
            <person name="Jin Y."/>
            <person name="Johnson S."/>
            <person name="Lee J."/>
            <person name="Lewis L."/>
            <person name="Liao D."/>
            <person name="Mark M.R."/>
            <person name="Robbie E."/>
            <person name="Sanchez C."/>
            <person name="Schoenfeld J."/>
            <person name="Seshagiri S."/>
            <person name="Simmons L."/>
            <person name="Singh J."/>
            <person name="Smith V."/>
            <person name="Stinson J."/>
            <person name="Vagts A."/>
            <person name="Vandlen R.L."/>
            <person name="Watanabe C."/>
            <person name="Wieand D."/>
            <person name="Woods K."/>
            <person name="Xie M.-H."/>
            <person name="Yansura D.G."/>
            <person name="Yi S."/>
            <person name="Yu G."/>
            <person name="Yuan J."/>
            <person name="Zhang M."/>
            <person name="Zhang Z."/>
            <person name="Goddard A.D."/>
            <person name="Wood W.I."/>
            <person name="Godowski P.J."/>
            <person name="Gray A.M."/>
        </authorList>
    </citation>
    <scope>NUCLEOTIDE SEQUENCE [LARGE SCALE MRNA]</scope>
    <scope>VARIANT THR-72</scope>
</reference>
<reference key="2">
    <citation type="journal article" date="2005" name="DNA Res.">
        <title>Signal sequence and keyword trap in silico for selection of full-length human cDNAs encoding secretion or membrane proteins from oligo-capped cDNA libraries.</title>
        <authorList>
            <person name="Otsuki T."/>
            <person name="Ota T."/>
            <person name="Nishikawa T."/>
            <person name="Hayashi K."/>
            <person name="Suzuki Y."/>
            <person name="Yamamoto J."/>
            <person name="Wakamatsu A."/>
            <person name="Kimura K."/>
            <person name="Sakamoto K."/>
            <person name="Hatano N."/>
            <person name="Kawai Y."/>
            <person name="Ishii S."/>
            <person name="Saito K."/>
            <person name="Kojima S."/>
            <person name="Sugiyama T."/>
            <person name="Ono T."/>
            <person name="Okano K."/>
            <person name="Yoshikawa Y."/>
            <person name="Aotsuka S."/>
            <person name="Sasaki N."/>
            <person name="Hattori A."/>
            <person name="Okumura K."/>
            <person name="Nagai K."/>
            <person name="Sugano S."/>
            <person name="Isogai T."/>
        </authorList>
    </citation>
    <scope>NUCLEOTIDE SEQUENCE [LARGE SCALE MRNA]</scope>
    <scope>VARIANT THR-72</scope>
    <source>
        <tissue>Embryo</tissue>
    </source>
</reference>
<reference key="3">
    <citation type="journal article" date="2004" name="Genome Res.">
        <title>The status, quality, and expansion of the NIH full-length cDNA project: the Mammalian Gene Collection (MGC).</title>
        <authorList>
            <consortium name="The MGC Project Team"/>
        </authorList>
    </citation>
    <scope>NUCLEOTIDE SEQUENCE [LARGE SCALE MRNA]</scope>
    <source>
        <tissue>Chondrosarcoma</tissue>
    </source>
</reference>
<reference key="4">
    <citation type="journal article" date="2009" name="BMC Dev. Biol.">
        <title>Isolation and characterization of a novel plasma membrane protein, osteoblast induction factor (obif), associated with osteoblast differentiation.</title>
        <authorList>
            <person name="Kanamoto T."/>
            <person name="Mizuhashi K."/>
            <person name="Terada K."/>
            <person name="Minami T."/>
            <person name="Yoshikawa H."/>
            <person name="Furukawa T."/>
        </authorList>
    </citation>
    <scope>FUNCTION</scope>
    <scope>SUBCELLULAR LOCATION</scope>
</reference>
<reference key="5">
    <citation type="journal article" date="2014" name="J. Proteomics">
        <title>An enzyme assisted RP-RPLC approach for in-depth analysis of human liver phosphoproteome.</title>
        <authorList>
            <person name="Bian Y."/>
            <person name="Song C."/>
            <person name="Cheng K."/>
            <person name="Dong M."/>
            <person name="Wang F."/>
            <person name="Huang J."/>
            <person name="Sun D."/>
            <person name="Wang L."/>
            <person name="Ye M."/>
            <person name="Zou H."/>
        </authorList>
    </citation>
    <scope>PHOSPHORYLATION [LARGE SCALE ANALYSIS] AT SER-272</scope>
    <scope>IDENTIFICATION BY MASS SPECTROMETRY [LARGE SCALE ANALYSIS]</scope>
    <source>
        <tissue>Liver</tissue>
    </source>
</reference>
<reference key="6">
    <citation type="journal article" date="2016" name="Neuropathology">
        <title>TMEM119 marks a subset of microglia in the human brain.</title>
        <authorList>
            <person name="Satoh J.I."/>
            <person name="Kino Y."/>
            <person name="Asahina N."/>
            <person name="Takitani M."/>
            <person name="Miyoshi J."/>
            <person name="Ishida T."/>
            <person name="Saito Y."/>
        </authorList>
    </citation>
    <scope>SUBCELLULAR LOCATION</scope>
    <scope>TISSUE SPECIFICITY</scope>
</reference>
<reference key="7">
    <citation type="journal article" date="2023" name="Mol. Cell. Proteomics">
        <title>Mapping the Human Chondroitin Sulfate Glycoproteome Reveals an Unexpected Correlation Between Glycan Sulfation and Attachment Site Characteristics.</title>
        <authorList>
            <person name="Noborn F."/>
            <person name="Nilsson J."/>
            <person name="Sihlbom C."/>
            <person name="Nikpour M."/>
            <person name="Kjellen L."/>
            <person name="Larson G."/>
        </authorList>
    </citation>
    <scope>SUBCELLULAR LOCATION</scope>
    <scope>TISSUE SPECIFICITY</scope>
    <scope>GLYCOSYLATION AT SER-41</scope>
</reference>
<organism>
    <name type="scientific">Homo sapiens</name>
    <name type="common">Human</name>
    <dbReference type="NCBI Taxonomy" id="9606"/>
    <lineage>
        <taxon>Eukaryota</taxon>
        <taxon>Metazoa</taxon>
        <taxon>Chordata</taxon>
        <taxon>Craniata</taxon>
        <taxon>Vertebrata</taxon>
        <taxon>Euteleostomi</taxon>
        <taxon>Mammalia</taxon>
        <taxon>Eutheria</taxon>
        <taxon>Euarchontoglires</taxon>
        <taxon>Primates</taxon>
        <taxon>Haplorrhini</taxon>
        <taxon>Catarrhini</taxon>
        <taxon>Hominidae</taxon>
        <taxon>Homo</taxon>
    </lineage>
</organism>
<keyword id="KW-0091">Biomineralization</keyword>
<keyword id="KW-1003">Cell membrane</keyword>
<keyword id="KW-0963">Cytoplasm</keyword>
<keyword id="KW-0221">Differentiation</keyword>
<keyword id="KW-0256">Endoplasmic reticulum</keyword>
<keyword id="KW-0325">Glycoprotein</keyword>
<keyword id="KW-0472">Membrane</keyword>
<keyword id="KW-0892">Osteogenesis</keyword>
<keyword id="KW-0597">Phosphoprotein</keyword>
<keyword id="KW-0654">Proteoglycan</keyword>
<keyword id="KW-1267">Proteomics identification</keyword>
<keyword id="KW-1185">Reference proteome</keyword>
<keyword id="KW-0964">Secreted</keyword>
<keyword id="KW-0732">Signal</keyword>
<keyword id="KW-0744">Spermatogenesis</keyword>
<keyword id="KW-0812">Transmembrane</keyword>
<keyword id="KW-1133">Transmembrane helix</keyword>
<protein>
    <recommendedName>
        <fullName>Transmembrane protein 119</fullName>
    </recommendedName>
    <alternativeName>
        <fullName>Osteoblast induction factor</fullName>
        <shortName>OBIF</shortName>
    </alternativeName>
</protein>
<sequence>MVSAAAPSLLILLLLLLGSVPATDARSVPLKATFLEDVAGSGEAEGSSASSPSLPPPWTPALSPTSMGPQPITLGGPSPPTNFLDGIVDFFRQYVMLIAVVGSLAFLLMFIVCAAVITRQKQKASAYYPSSFPKKKYVDQSDRAGGPRAFSEVPDRAPDSRPEEALDSSRQLQADILAATQNLKSPTRAALGGGDGARMVEGRGAEEEEKGSQEGDQEVQGHGVPVETPEAQEEPCSGVLEGAVVAGEGQGELEGSLLLAQEAQGPVGPPESPCACSSVHPSV</sequence>
<accession>Q4V9L6</accession>
<accession>Q6UXE5</accession>
<accession>Q8N2F5</accession>
<evidence type="ECO:0000250" key="1">
    <source>
        <dbReference type="UniProtKB" id="Q8R138"/>
    </source>
</evidence>
<evidence type="ECO:0000255" key="2"/>
<evidence type="ECO:0000256" key="3">
    <source>
        <dbReference type="SAM" id="MobiDB-lite"/>
    </source>
</evidence>
<evidence type="ECO:0000269" key="4">
    <source>
    </source>
</evidence>
<evidence type="ECO:0000269" key="5">
    <source>
    </source>
</evidence>
<evidence type="ECO:0000269" key="6">
    <source>
    </source>
</evidence>
<evidence type="ECO:0000269" key="7">
    <source>
    </source>
</evidence>
<evidence type="ECO:0000269" key="8">
    <source>
    </source>
</evidence>
<evidence type="ECO:0000305" key="9"/>
<evidence type="ECO:0007744" key="10">
    <source>
    </source>
</evidence>
<gene>
    <name type="primary">TMEM119</name>
    <name type="ORF">PSEC0199</name>
    <name type="ORF">UNQ731/PRO1415</name>
</gene>
<proteinExistence type="evidence at protein level"/>
<name>TM119_HUMAN</name>
<dbReference type="EMBL" id="AY358389">
    <property type="protein sequence ID" value="AAQ88755.1"/>
    <property type="molecule type" value="mRNA"/>
</dbReference>
<dbReference type="EMBL" id="AK075501">
    <property type="protein sequence ID" value="BAC11656.1"/>
    <property type="molecule type" value="mRNA"/>
</dbReference>
<dbReference type="EMBL" id="BC096825">
    <property type="protein sequence ID" value="AAH96825.1"/>
    <property type="molecule type" value="mRNA"/>
</dbReference>
<dbReference type="CCDS" id="CCDS9119.1"/>
<dbReference type="RefSeq" id="NP_859075.2">
    <property type="nucleotide sequence ID" value="NM_181724.3"/>
</dbReference>
<dbReference type="RefSeq" id="XP_011536573.1">
    <property type="nucleotide sequence ID" value="XM_011538271.3"/>
</dbReference>
<dbReference type="BioGRID" id="130795">
    <property type="interactions" value="8"/>
</dbReference>
<dbReference type="FunCoup" id="Q4V9L6">
    <property type="interactions" value="315"/>
</dbReference>
<dbReference type="IntAct" id="Q4V9L6">
    <property type="interactions" value="1"/>
</dbReference>
<dbReference type="MINT" id="Q4V9L6"/>
<dbReference type="STRING" id="9606.ENSP00000376553"/>
<dbReference type="TCDB" id="9.B.413.1.1">
    <property type="family name" value="the tmem119 (tmem119) family"/>
</dbReference>
<dbReference type="GlyCosmos" id="Q4V9L6">
    <property type="glycosylation" value="1 site, No reported glycans"/>
</dbReference>
<dbReference type="GlyGen" id="Q4V9L6">
    <property type="glycosylation" value="2 sites"/>
</dbReference>
<dbReference type="iPTMnet" id="Q4V9L6"/>
<dbReference type="PhosphoSitePlus" id="Q4V9L6"/>
<dbReference type="BioMuta" id="TMEM119"/>
<dbReference type="DMDM" id="74754588"/>
<dbReference type="jPOST" id="Q4V9L6"/>
<dbReference type="MassIVE" id="Q4V9L6"/>
<dbReference type="PaxDb" id="9606-ENSP00000376553"/>
<dbReference type="PeptideAtlas" id="Q4V9L6"/>
<dbReference type="ProteomicsDB" id="62285"/>
<dbReference type="TopDownProteomics" id="Q4V9L6"/>
<dbReference type="Antibodypedia" id="55081">
    <property type="antibodies" value="37 antibodies from 14 providers"/>
</dbReference>
<dbReference type="DNASU" id="338773"/>
<dbReference type="Ensembl" id="ENST00000392806.4">
    <property type="protein sequence ID" value="ENSP00000376553.3"/>
    <property type="gene ID" value="ENSG00000183160.9"/>
</dbReference>
<dbReference type="GeneID" id="338773"/>
<dbReference type="KEGG" id="hsa:338773"/>
<dbReference type="MANE-Select" id="ENST00000392806.4">
    <property type="protein sequence ID" value="ENSP00000376553.3"/>
    <property type="RefSeq nucleotide sequence ID" value="NM_181724.3"/>
    <property type="RefSeq protein sequence ID" value="NP_859075.2"/>
</dbReference>
<dbReference type="UCSC" id="uc001tng.4">
    <property type="organism name" value="human"/>
</dbReference>
<dbReference type="AGR" id="HGNC:27884"/>
<dbReference type="CTD" id="338773"/>
<dbReference type="DisGeNET" id="338773"/>
<dbReference type="GeneCards" id="TMEM119"/>
<dbReference type="HGNC" id="HGNC:27884">
    <property type="gene designation" value="TMEM119"/>
</dbReference>
<dbReference type="HPA" id="ENSG00000183160">
    <property type="expression patterns" value="Low tissue specificity"/>
</dbReference>
<dbReference type="MIM" id="618989">
    <property type="type" value="gene"/>
</dbReference>
<dbReference type="neXtProt" id="NX_Q4V9L6"/>
<dbReference type="OpenTargets" id="ENSG00000183160"/>
<dbReference type="PharmGKB" id="PA143485640"/>
<dbReference type="VEuPathDB" id="HostDB:ENSG00000183160"/>
<dbReference type="eggNOG" id="ENOG502S283">
    <property type="taxonomic scope" value="Eukaryota"/>
</dbReference>
<dbReference type="GeneTree" id="ENSGT00390000017134"/>
<dbReference type="HOGENOM" id="CLU_086693_0_0_1"/>
<dbReference type="InParanoid" id="Q4V9L6"/>
<dbReference type="OMA" id="EEPCSGV"/>
<dbReference type="OrthoDB" id="8943443at2759"/>
<dbReference type="PAN-GO" id="Q4V9L6">
    <property type="GO annotations" value="4 GO annotations based on evolutionary models"/>
</dbReference>
<dbReference type="PhylomeDB" id="Q4V9L6"/>
<dbReference type="TreeFam" id="TF336958"/>
<dbReference type="PathwayCommons" id="Q4V9L6"/>
<dbReference type="SignaLink" id="Q4V9L6"/>
<dbReference type="BioGRID-ORCS" id="338773">
    <property type="hits" value="19 hits in 1141 CRISPR screens"/>
</dbReference>
<dbReference type="ChiTaRS" id="TMEM119">
    <property type="organism name" value="human"/>
</dbReference>
<dbReference type="GenomeRNAi" id="338773"/>
<dbReference type="Pharos" id="Q4V9L6">
    <property type="development level" value="Tbio"/>
</dbReference>
<dbReference type="PRO" id="PR:Q4V9L6"/>
<dbReference type="Proteomes" id="UP000005640">
    <property type="component" value="Chromosome 12"/>
</dbReference>
<dbReference type="RNAct" id="Q4V9L6">
    <property type="molecule type" value="protein"/>
</dbReference>
<dbReference type="Bgee" id="ENSG00000183160">
    <property type="expression patterns" value="Expressed in stromal cell of endometrium and 157 other cell types or tissues"/>
</dbReference>
<dbReference type="ExpressionAtlas" id="Q4V9L6">
    <property type="expression patterns" value="baseline and differential"/>
</dbReference>
<dbReference type="GO" id="GO:0005789">
    <property type="term" value="C:endoplasmic reticulum membrane"/>
    <property type="evidence" value="ECO:0007669"/>
    <property type="project" value="UniProtKB-SubCell"/>
</dbReference>
<dbReference type="GO" id="GO:0005576">
    <property type="term" value="C:extracellular region"/>
    <property type="evidence" value="ECO:0007669"/>
    <property type="project" value="UniProtKB-SubCell"/>
</dbReference>
<dbReference type="GO" id="GO:0005886">
    <property type="term" value="C:plasma membrane"/>
    <property type="evidence" value="ECO:0000314"/>
    <property type="project" value="UniProtKB"/>
</dbReference>
<dbReference type="GO" id="GO:0031214">
    <property type="term" value="P:biomineral tissue development"/>
    <property type="evidence" value="ECO:0007669"/>
    <property type="project" value="UniProtKB-KW"/>
</dbReference>
<dbReference type="GO" id="GO:0030509">
    <property type="term" value="P:BMP signaling pathway"/>
    <property type="evidence" value="ECO:0000250"/>
    <property type="project" value="ARUK-UCL"/>
</dbReference>
<dbReference type="GO" id="GO:0001958">
    <property type="term" value="P:endochondral ossification"/>
    <property type="evidence" value="ECO:0000250"/>
    <property type="project" value="ARUK-UCL"/>
</dbReference>
<dbReference type="GO" id="GO:0045779">
    <property type="term" value="P:negative regulation of bone resorption"/>
    <property type="evidence" value="ECO:0000250"/>
    <property type="project" value="ARUK-UCL"/>
</dbReference>
<dbReference type="GO" id="GO:0010832">
    <property type="term" value="P:negative regulation of myotube differentiation"/>
    <property type="evidence" value="ECO:0000250"/>
    <property type="project" value="ARUK-UCL"/>
</dbReference>
<dbReference type="GO" id="GO:0001649">
    <property type="term" value="P:osteoblast differentiation"/>
    <property type="evidence" value="ECO:0007669"/>
    <property type="project" value="Ensembl"/>
</dbReference>
<dbReference type="GO" id="GO:1903012">
    <property type="term" value="P:positive regulation of bone development"/>
    <property type="evidence" value="ECO:0000250"/>
    <property type="project" value="UniProtKB"/>
</dbReference>
<dbReference type="GO" id="GO:0030501">
    <property type="term" value="P:positive regulation of bone mineralization"/>
    <property type="evidence" value="ECO:0000314"/>
    <property type="project" value="UniProtKB"/>
</dbReference>
<dbReference type="GO" id="GO:0010628">
    <property type="term" value="P:positive regulation of gene expression"/>
    <property type="evidence" value="ECO:0000250"/>
    <property type="project" value="ARUK-UCL"/>
</dbReference>
<dbReference type="GO" id="GO:0045669">
    <property type="term" value="P:positive regulation of osteoblast differentiation"/>
    <property type="evidence" value="ECO:0000314"/>
    <property type="project" value="UniProtKB"/>
</dbReference>
<dbReference type="GO" id="GO:0033690">
    <property type="term" value="P:positive regulation of osteoblast proliferation"/>
    <property type="evidence" value="ECO:0000314"/>
    <property type="project" value="UniProtKB"/>
</dbReference>
<dbReference type="GO" id="GO:0048515">
    <property type="term" value="P:spermatid differentiation"/>
    <property type="evidence" value="ECO:0000250"/>
    <property type="project" value="UniProtKB"/>
</dbReference>
<dbReference type="GO" id="GO:0007283">
    <property type="term" value="P:spermatogenesis"/>
    <property type="evidence" value="ECO:0000250"/>
    <property type="project" value="UniProtKB"/>
</dbReference>
<dbReference type="InterPro" id="IPR031453">
    <property type="entry name" value="TMEM119"/>
</dbReference>
<dbReference type="PANTHER" id="PTHR28645">
    <property type="entry name" value="TRANSMEMBRANE PROTEIN 119"/>
    <property type="match status" value="1"/>
</dbReference>
<dbReference type="PANTHER" id="PTHR28645:SF1">
    <property type="entry name" value="TRANSMEMBRANE PROTEIN 119"/>
    <property type="match status" value="1"/>
</dbReference>
<dbReference type="Pfam" id="PF15724">
    <property type="entry name" value="TMEM119"/>
    <property type="match status" value="1"/>
</dbReference>
<feature type="signal peptide" evidence="2">
    <location>
        <begin position="1"/>
        <end position="25"/>
    </location>
</feature>
<feature type="chain" id="PRO_0000251220" description="Transmembrane protein 119">
    <location>
        <begin position="26"/>
        <end position="283"/>
    </location>
</feature>
<feature type="topological domain" description="Extracellular" evidence="2">
    <location>
        <begin position="26"/>
        <end position="96"/>
    </location>
</feature>
<feature type="transmembrane region" description="Helical" evidence="2">
    <location>
        <begin position="97"/>
        <end position="117"/>
    </location>
</feature>
<feature type="topological domain" description="Cytoplasmic" evidence="2">
    <location>
        <begin position="118"/>
        <end position="283"/>
    </location>
</feature>
<feature type="region of interest" description="Disordered" evidence="3">
    <location>
        <begin position="43"/>
        <end position="76"/>
    </location>
</feature>
<feature type="region of interest" description="Disordered" evidence="3">
    <location>
        <begin position="136"/>
        <end position="168"/>
    </location>
</feature>
<feature type="region of interest" description="Disordered" evidence="3">
    <location>
        <begin position="183"/>
        <end position="283"/>
    </location>
</feature>
<feature type="compositionally biased region" description="Low complexity" evidence="3">
    <location>
        <begin position="43"/>
        <end position="52"/>
    </location>
</feature>
<feature type="compositionally biased region" description="Basic and acidic residues" evidence="3">
    <location>
        <begin position="153"/>
        <end position="164"/>
    </location>
</feature>
<feature type="compositionally biased region" description="Basic and acidic residues" evidence="3">
    <location>
        <begin position="198"/>
        <end position="213"/>
    </location>
</feature>
<feature type="compositionally biased region" description="Low complexity" evidence="3">
    <location>
        <begin position="238"/>
        <end position="264"/>
    </location>
</feature>
<feature type="modified residue" description="Phosphoserine" evidence="10">
    <location>
        <position position="272"/>
    </location>
</feature>
<feature type="glycosylation site" description="O-linked (Xyl...) (chondroitin sulfate) serine" evidence="8">
    <location>
        <position position="41"/>
    </location>
</feature>
<feature type="sequence variant" id="VAR_027663" description="In dbSNP:rs7975237." evidence="4 5">
    <original>I</original>
    <variation>T</variation>
    <location>
        <position position="72"/>
    </location>
</feature>
<feature type="sequence conflict" description="In Ref. 2; BAC11656." evidence="9" ref="2">
    <original>E</original>
    <variation>G</variation>
    <location>
        <position position="262"/>
    </location>
</feature>